<accession>B5FEQ2</accession>
<reference key="1">
    <citation type="submission" date="2008-08" db="EMBL/GenBank/DDBJ databases">
        <title>Complete sequence of Vibrio fischeri strain MJ11.</title>
        <authorList>
            <person name="Mandel M.J."/>
            <person name="Stabb E.V."/>
            <person name="Ruby E.G."/>
            <person name="Ferriera S."/>
            <person name="Johnson J."/>
            <person name="Kravitz S."/>
            <person name="Beeson K."/>
            <person name="Sutton G."/>
            <person name="Rogers Y.-H."/>
            <person name="Friedman R."/>
            <person name="Frazier M."/>
            <person name="Venter J.C."/>
        </authorList>
    </citation>
    <scope>NUCLEOTIDE SEQUENCE [LARGE SCALE GENOMIC DNA]</scope>
    <source>
        <strain>MJ11</strain>
    </source>
</reference>
<feature type="chain" id="PRO_0000366274" description="Ribosomal RNA large subunit methyltransferase I">
    <location>
        <begin position="1"/>
        <end position="396"/>
    </location>
</feature>
<feature type="domain" description="PUA" evidence="1">
    <location>
        <begin position="2"/>
        <end position="81"/>
    </location>
</feature>
<proteinExistence type="inferred from homology"/>
<dbReference type="EC" id="2.1.1.191" evidence="1"/>
<dbReference type="EMBL" id="CP001139">
    <property type="protein sequence ID" value="ACH66362.1"/>
    <property type="molecule type" value="Genomic_DNA"/>
</dbReference>
<dbReference type="RefSeq" id="WP_005419656.1">
    <property type="nucleotide sequence ID" value="NC_011184.1"/>
</dbReference>
<dbReference type="SMR" id="B5FEQ2"/>
<dbReference type="KEGG" id="vfm:VFMJ11_1598"/>
<dbReference type="HOGENOM" id="CLU_014042_0_0_6"/>
<dbReference type="Proteomes" id="UP000001857">
    <property type="component" value="Chromosome I"/>
</dbReference>
<dbReference type="GO" id="GO:0005737">
    <property type="term" value="C:cytoplasm"/>
    <property type="evidence" value="ECO:0007669"/>
    <property type="project" value="UniProtKB-SubCell"/>
</dbReference>
<dbReference type="GO" id="GO:0003723">
    <property type="term" value="F:RNA binding"/>
    <property type="evidence" value="ECO:0007669"/>
    <property type="project" value="UniProtKB-KW"/>
</dbReference>
<dbReference type="GO" id="GO:0016434">
    <property type="term" value="F:rRNA (cytosine) methyltransferase activity"/>
    <property type="evidence" value="ECO:0007669"/>
    <property type="project" value="UniProtKB-UniRule"/>
</dbReference>
<dbReference type="CDD" id="cd02440">
    <property type="entry name" value="AdoMet_MTases"/>
    <property type="match status" value="1"/>
</dbReference>
<dbReference type="CDD" id="cd21153">
    <property type="entry name" value="PUA_RlmI"/>
    <property type="match status" value="1"/>
</dbReference>
<dbReference type="CDD" id="cd11572">
    <property type="entry name" value="RlmI_M_like"/>
    <property type="match status" value="1"/>
</dbReference>
<dbReference type="Gene3D" id="2.30.130.10">
    <property type="entry name" value="PUA domain"/>
    <property type="match status" value="1"/>
</dbReference>
<dbReference type="Gene3D" id="3.30.750.80">
    <property type="entry name" value="RNA methyltransferase domain (HRMD) like"/>
    <property type="match status" value="1"/>
</dbReference>
<dbReference type="Gene3D" id="3.40.50.150">
    <property type="entry name" value="Vaccinia Virus protein VP39"/>
    <property type="match status" value="1"/>
</dbReference>
<dbReference type="HAMAP" id="MF_01857">
    <property type="entry name" value="23SrRNA_methyltr_I"/>
    <property type="match status" value="1"/>
</dbReference>
<dbReference type="InterPro" id="IPR002478">
    <property type="entry name" value="PUA"/>
</dbReference>
<dbReference type="InterPro" id="IPR015947">
    <property type="entry name" value="PUA-like_sf"/>
</dbReference>
<dbReference type="InterPro" id="IPR036974">
    <property type="entry name" value="PUA_sf"/>
</dbReference>
<dbReference type="InterPro" id="IPR023542">
    <property type="entry name" value="RLMI"/>
</dbReference>
<dbReference type="InterPro" id="IPR041532">
    <property type="entry name" value="RlmI-like_PUA"/>
</dbReference>
<dbReference type="InterPro" id="IPR019614">
    <property type="entry name" value="SAM-dep_methyl-trfase"/>
</dbReference>
<dbReference type="InterPro" id="IPR029063">
    <property type="entry name" value="SAM-dependent_MTases_sf"/>
</dbReference>
<dbReference type="PANTHER" id="PTHR42873">
    <property type="entry name" value="RIBOSOMAL RNA LARGE SUBUNIT METHYLTRANSFERASE"/>
    <property type="match status" value="1"/>
</dbReference>
<dbReference type="PANTHER" id="PTHR42873:SF1">
    <property type="entry name" value="S-ADENOSYLMETHIONINE-DEPENDENT METHYLTRANSFERASE DOMAIN-CONTAINING PROTEIN"/>
    <property type="match status" value="1"/>
</dbReference>
<dbReference type="Pfam" id="PF10672">
    <property type="entry name" value="Methyltrans_SAM"/>
    <property type="match status" value="1"/>
</dbReference>
<dbReference type="Pfam" id="PF17785">
    <property type="entry name" value="PUA_3"/>
    <property type="match status" value="1"/>
</dbReference>
<dbReference type="SMART" id="SM00359">
    <property type="entry name" value="PUA"/>
    <property type="match status" value="1"/>
</dbReference>
<dbReference type="SUPFAM" id="SSF88697">
    <property type="entry name" value="PUA domain-like"/>
    <property type="match status" value="1"/>
</dbReference>
<dbReference type="SUPFAM" id="SSF53335">
    <property type="entry name" value="S-adenosyl-L-methionine-dependent methyltransferases"/>
    <property type="match status" value="1"/>
</dbReference>
<dbReference type="PROSITE" id="PS50890">
    <property type="entry name" value="PUA"/>
    <property type="match status" value="1"/>
</dbReference>
<keyword id="KW-0963">Cytoplasm</keyword>
<keyword id="KW-0489">Methyltransferase</keyword>
<keyword id="KW-0694">RNA-binding</keyword>
<keyword id="KW-0698">rRNA processing</keyword>
<keyword id="KW-0949">S-adenosyl-L-methionine</keyword>
<keyword id="KW-0808">Transferase</keyword>
<sequence length="396" mass="44336">MTVSIYLAKGRDKALRRRHPWIFSRGIDRIDGKAELGETVEIYANNGEWLARGAFSPQSQIRARVWTFDKNEAIDKDFFVRKLNQAQALRDVLAERDGLTGYRLIAAESDGLPGITIDRYQDYFVCQLLSAGAEATKDLLVEALVECYPDCNIYERSDVSVRKKEGLKQRTGVLHGEEPPESVVIEENGVKISVDIVNGHKTGFYLDQRDSRERACKYVKDKSVLNCFSYTGGFGLYALKGGAKHVINADVSQLALDTAKYNAEINKFDLSKAEFLNADVFKLLREYRDNGTKFDVVIMDPPKFAESKNQLTGACRGYKDINMLAMQILNPGGTLLTYSCSGLMDAGLFQKIVADAALDAHRTVQFIERFEQAADHPLDSAYPEGFYLKGFACRVV</sequence>
<gene>
    <name evidence="1" type="primary">rlmI</name>
    <name type="ordered locus">VFMJ11_1598</name>
</gene>
<organism>
    <name type="scientific">Aliivibrio fischeri (strain MJ11)</name>
    <name type="common">Vibrio fischeri</name>
    <dbReference type="NCBI Taxonomy" id="388396"/>
    <lineage>
        <taxon>Bacteria</taxon>
        <taxon>Pseudomonadati</taxon>
        <taxon>Pseudomonadota</taxon>
        <taxon>Gammaproteobacteria</taxon>
        <taxon>Vibrionales</taxon>
        <taxon>Vibrionaceae</taxon>
        <taxon>Aliivibrio</taxon>
    </lineage>
</organism>
<protein>
    <recommendedName>
        <fullName evidence="1">Ribosomal RNA large subunit methyltransferase I</fullName>
        <ecNumber evidence="1">2.1.1.191</ecNumber>
    </recommendedName>
    <alternativeName>
        <fullName evidence="1">23S rRNA m5C1962 methyltransferase</fullName>
    </alternativeName>
    <alternativeName>
        <fullName evidence="1">rRNA (cytosine-C(5)-)-methyltransferase RlmI</fullName>
    </alternativeName>
</protein>
<name>RLMI_ALIFM</name>
<comment type="function">
    <text evidence="1">Specifically methylates the cytosine at position 1962 (m5C1962) of 23S rRNA.</text>
</comment>
<comment type="catalytic activity">
    <reaction evidence="1">
        <text>cytidine(1962) in 23S rRNA + S-adenosyl-L-methionine = 5-methylcytidine(1962) in 23S rRNA + S-adenosyl-L-homocysteine + H(+)</text>
        <dbReference type="Rhea" id="RHEA:42912"/>
        <dbReference type="Rhea" id="RHEA-COMP:10382"/>
        <dbReference type="Rhea" id="RHEA-COMP:10386"/>
        <dbReference type="ChEBI" id="CHEBI:15378"/>
        <dbReference type="ChEBI" id="CHEBI:57856"/>
        <dbReference type="ChEBI" id="CHEBI:59789"/>
        <dbReference type="ChEBI" id="CHEBI:74483"/>
        <dbReference type="ChEBI" id="CHEBI:82748"/>
        <dbReference type="EC" id="2.1.1.191"/>
    </reaction>
</comment>
<comment type="subcellular location">
    <subcellularLocation>
        <location evidence="1">Cytoplasm</location>
    </subcellularLocation>
</comment>
<comment type="similarity">
    <text evidence="1">Belongs to the methyltransferase superfamily. RlmI family.</text>
</comment>
<evidence type="ECO:0000255" key="1">
    <source>
        <dbReference type="HAMAP-Rule" id="MF_01857"/>
    </source>
</evidence>